<sequence>MIEFRNVSKVYPNGTKGLNNINLKIQKGEFVVMVGLSGAGKSTLLRSVNRLHEITEGEIMIEGESITAAKGKGLRRMRRDIGMIFQSFNLVKRSTVLKNVLAGRVGYHSTLRTTLGLFPKEDLELAFQSLKRVNILEKAYARADELSGGQQQRVSIARALAQEAKIILADEPVASLDPLTTKQVLDDLKKINEDFGITTIVNLHSIDLARQYATRIIGLHAGEIVFDGLVEEATDEKFAEIYGDVAQKSKLLEVAVK</sequence>
<organism>
    <name type="scientific">Bacillus cereus (strain ZK / E33L)</name>
    <dbReference type="NCBI Taxonomy" id="288681"/>
    <lineage>
        <taxon>Bacteria</taxon>
        <taxon>Bacillati</taxon>
        <taxon>Bacillota</taxon>
        <taxon>Bacilli</taxon>
        <taxon>Bacillales</taxon>
        <taxon>Bacillaceae</taxon>
        <taxon>Bacillus</taxon>
        <taxon>Bacillus cereus group</taxon>
    </lineage>
</organism>
<gene>
    <name evidence="1" type="primary">phnC</name>
    <name type="ordered locus">BCE33L3391</name>
</gene>
<evidence type="ECO:0000255" key="1">
    <source>
        <dbReference type="HAMAP-Rule" id="MF_01713"/>
    </source>
</evidence>
<comment type="function">
    <text evidence="1">Part of the ABC transporter complex PhnCDE involved in phosphonates import. Responsible for energy coupling to the transport system.</text>
</comment>
<comment type="catalytic activity">
    <reaction evidence="1">
        <text>phosphonate(out) + ATP + H2O = phosphonate(in) + ADP + phosphate + H(+)</text>
        <dbReference type="Rhea" id="RHEA:18065"/>
        <dbReference type="ChEBI" id="CHEBI:15377"/>
        <dbReference type="ChEBI" id="CHEBI:15378"/>
        <dbReference type="ChEBI" id="CHEBI:16215"/>
        <dbReference type="ChEBI" id="CHEBI:30616"/>
        <dbReference type="ChEBI" id="CHEBI:43474"/>
        <dbReference type="ChEBI" id="CHEBI:456216"/>
        <dbReference type="EC" id="7.3.2.2"/>
    </reaction>
</comment>
<comment type="subunit">
    <text evidence="1">The complex is composed of two ATP-binding proteins (PhnC), two transmembrane proteins (PhnE) and a solute-binding protein (PhnD).</text>
</comment>
<comment type="subcellular location">
    <subcellularLocation>
        <location evidence="1">Cell membrane</location>
        <topology evidence="1">Peripheral membrane protein</topology>
    </subcellularLocation>
</comment>
<comment type="similarity">
    <text evidence="1">Belongs to the ABC transporter superfamily. Phosphonates importer (TC 3.A.1.9.1) family.</text>
</comment>
<protein>
    <recommendedName>
        <fullName evidence="1">Phosphonates import ATP-binding protein PhnC</fullName>
        <ecNumber evidence="1">7.3.2.2</ecNumber>
    </recommendedName>
</protein>
<feature type="chain" id="PRO_0000092691" description="Phosphonates import ATP-binding protein PhnC">
    <location>
        <begin position="1"/>
        <end position="257"/>
    </location>
</feature>
<feature type="domain" description="ABC transporter" evidence="1">
    <location>
        <begin position="2"/>
        <end position="246"/>
    </location>
</feature>
<feature type="binding site" evidence="1">
    <location>
        <begin position="35"/>
        <end position="42"/>
    </location>
    <ligand>
        <name>ATP</name>
        <dbReference type="ChEBI" id="CHEBI:30616"/>
    </ligand>
</feature>
<reference key="1">
    <citation type="journal article" date="2006" name="J. Bacteriol.">
        <title>Pathogenomic sequence analysis of Bacillus cereus and Bacillus thuringiensis isolates closely related to Bacillus anthracis.</title>
        <authorList>
            <person name="Han C.S."/>
            <person name="Xie G."/>
            <person name="Challacombe J.F."/>
            <person name="Altherr M.R."/>
            <person name="Bhotika S.S."/>
            <person name="Bruce D."/>
            <person name="Campbell C.S."/>
            <person name="Campbell M.L."/>
            <person name="Chen J."/>
            <person name="Chertkov O."/>
            <person name="Cleland C."/>
            <person name="Dimitrijevic M."/>
            <person name="Doggett N.A."/>
            <person name="Fawcett J.J."/>
            <person name="Glavina T."/>
            <person name="Goodwin L.A."/>
            <person name="Hill K.K."/>
            <person name="Hitchcock P."/>
            <person name="Jackson P.J."/>
            <person name="Keim P."/>
            <person name="Kewalramani A.R."/>
            <person name="Longmire J."/>
            <person name="Lucas S."/>
            <person name="Malfatti S."/>
            <person name="McMurry K."/>
            <person name="Meincke L.J."/>
            <person name="Misra M."/>
            <person name="Moseman B.L."/>
            <person name="Mundt M."/>
            <person name="Munk A.C."/>
            <person name="Okinaka R.T."/>
            <person name="Parson-Quintana B."/>
            <person name="Reilly L.P."/>
            <person name="Richardson P."/>
            <person name="Robinson D.L."/>
            <person name="Rubin E."/>
            <person name="Saunders E."/>
            <person name="Tapia R."/>
            <person name="Tesmer J.G."/>
            <person name="Thayer N."/>
            <person name="Thompson L.S."/>
            <person name="Tice H."/>
            <person name="Ticknor L.O."/>
            <person name="Wills P.L."/>
            <person name="Brettin T.S."/>
            <person name="Gilna P."/>
        </authorList>
    </citation>
    <scope>NUCLEOTIDE SEQUENCE [LARGE SCALE GENOMIC DNA]</scope>
    <source>
        <strain>ZK / E33L</strain>
    </source>
</reference>
<name>PHNC_BACCZ</name>
<dbReference type="EC" id="7.3.2.2" evidence="1"/>
<dbReference type="EMBL" id="CP000001">
    <property type="protein sequence ID" value="AAU16873.1"/>
    <property type="molecule type" value="Genomic_DNA"/>
</dbReference>
<dbReference type="RefSeq" id="WP_000569253.1">
    <property type="nucleotide sequence ID" value="NZ_CP009968.1"/>
</dbReference>
<dbReference type="SMR" id="Q637E2"/>
<dbReference type="KEGG" id="bcz:BCE33L3391"/>
<dbReference type="PATRIC" id="fig|288681.22.peg.2026"/>
<dbReference type="Proteomes" id="UP000002612">
    <property type="component" value="Chromosome"/>
</dbReference>
<dbReference type="GO" id="GO:0005886">
    <property type="term" value="C:plasma membrane"/>
    <property type="evidence" value="ECO:0007669"/>
    <property type="project" value="UniProtKB-SubCell"/>
</dbReference>
<dbReference type="GO" id="GO:0015416">
    <property type="term" value="F:ABC-type phosphonate transporter activity"/>
    <property type="evidence" value="ECO:0007669"/>
    <property type="project" value="UniProtKB-EC"/>
</dbReference>
<dbReference type="GO" id="GO:0005524">
    <property type="term" value="F:ATP binding"/>
    <property type="evidence" value="ECO:0007669"/>
    <property type="project" value="UniProtKB-KW"/>
</dbReference>
<dbReference type="GO" id="GO:0016887">
    <property type="term" value="F:ATP hydrolysis activity"/>
    <property type="evidence" value="ECO:0007669"/>
    <property type="project" value="InterPro"/>
</dbReference>
<dbReference type="CDD" id="cd03256">
    <property type="entry name" value="ABC_PhnC_transporter"/>
    <property type="match status" value="1"/>
</dbReference>
<dbReference type="FunFam" id="3.40.50.300:FF:001482">
    <property type="entry name" value="Phosphonates import ATP-binding protein PhnC"/>
    <property type="match status" value="1"/>
</dbReference>
<dbReference type="Gene3D" id="3.40.50.300">
    <property type="entry name" value="P-loop containing nucleotide triphosphate hydrolases"/>
    <property type="match status" value="1"/>
</dbReference>
<dbReference type="InterPro" id="IPR003593">
    <property type="entry name" value="AAA+_ATPase"/>
</dbReference>
<dbReference type="InterPro" id="IPR003439">
    <property type="entry name" value="ABC_transporter-like_ATP-bd"/>
</dbReference>
<dbReference type="InterPro" id="IPR017871">
    <property type="entry name" value="ABC_transporter-like_CS"/>
</dbReference>
<dbReference type="InterPro" id="IPR012693">
    <property type="entry name" value="ABC_transpr_PhnC"/>
</dbReference>
<dbReference type="InterPro" id="IPR050086">
    <property type="entry name" value="MetN_ABC_transporter-like"/>
</dbReference>
<dbReference type="InterPro" id="IPR027417">
    <property type="entry name" value="P-loop_NTPase"/>
</dbReference>
<dbReference type="NCBIfam" id="TIGR02315">
    <property type="entry name" value="ABC_phnC"/>
    <property type="match status" value="1"/>
</dbReference>
<dbReference type="PANTHER" id="PTHR43166">
    <property type="entry name" value="AMINO ACID IMPORT ATP-BINDING PROTEIN"/>
    <property type="match status" value="1"/>
</dbReference>
<dbReference type="PANTHER" id="PTHR43166:SF6">
    <property type="entry name" value="PHOSPHONATES IMPORT ATP-BINDING PROTEIN PHNC"/>
    <property type="match status" value="1"/>
</dbReference>
<dbReference type="Pfam" id="PF00005">
    <property type="entry name" value="ABC_tran"/>
    <property type="match status" value="1"/>
</dbReference>
<dbReference type="SMART" id="SM00382">
    <property type="entry name" value="AAA"/>
    <property type="match status" value="1"/>
</dbReference>
<dbReference type="SUPFAM" id="SSF52540">
    <property type="entry name" value="P-loop containing nucleoside triphosphate hydrolases"/>
    <property type="match status" value="1"/>
</dbReference>
<dbReference type="PROSITE" id="PS00211">
    <property type="entry name" value="ABC_TRANSPORTER_1"/>
    <property type="match status" value="1"/>
</dbReference>
<dbReference type="PROSITE" id="PS50893">
    <property type="entry name" value="ABC_TRANSPORTER_2"/>
    <property type="match status" value="1"/>
</dbReference>
<dbReference type="PROSITE" id="PS51249">
    <property type="entry name" value="PHNC"/>
    <property type="match status" value="1"/>
</dbReference>
<keyword id="KW-0067">ATP-binding</keyword>
<keyword id="KW-1003">Cell membrane</keyword>
<keyword id="KW-0472">Membrane</keyword>
<keyword id="KW-0547">Nucleotide-binding</keyword>
<keyword id="KW-0918">Phosphonate transport</keyword>
<keyword id="KW-1278">Translocase</keyword>
<keyword id="KW-0813">Transport</keyword>
<accession>Q637E2</accession>
<proteinExistence type="inferred from homology"/>